<dbReference type="EMBL" id="FJ554639">
    <property type="protein sequence ID" value="ACN22042.1"/>
    <property type="molecule type" value="mRNA"/>
</dbReference>
<dbReference type="SMR" id="C0K3N5"/>
<dbReference type="GO" id="GO:0005615">
    <property type="term" value="C:extracellular space"/>
    <property type="evidence" value="ECO:0007669"/>
    <property type="project" value="TreeGrafter"/>
</dbReference>
<dbReference type="GO" id="GO:0016020">
    <property type="term" value="C:membrane"/>
    <property type="evidence" value="ECO:0007669"/>
    <property type="project" value="InterPro"/>
</dbReference>
<dbReference type="GO" id="GO:0042056">
    <property type="term" value="F:chemoattractant activity"/>
    <property type="evidence" value="ECO:0007669"/>
    <property type="project" value="TreeGrafter"/>
</dbReference>
<dbReference type="GO" id="GO:0008083">
    <property type="term" value="F:growth factor activity"/>
    <property type="evidence" value="ECO:0007669"/>
    <property type="project" value="UniProtKB-KW"/>
</dbReference>
<dbReference type="GO" id="GO:0008201">
    <property type="term" value="F:heparin binding"/>
    <property type="evidence" value="ECO:0007669"/>
    <property type="project" value="UniProtKB-KW"/>
</dbReference>
<dbReference type="GO" id="GO:0005172">
    <property type="term" value="F:vascular endothelial growth factor receptor binding"/>
    <property type="evidence" value="ECO:0007669"/>
    <property type="project" value="TreeGrafter"/>
</dbReference>
<dbReference type="GO" id="GO:0030154">
    <property type="term" value="P:cell differentiation"/>
    <property type="evidence" value="ECO:0007669"/>
    <property type="project" value="UniProtKB-KW"/>
</dbReference>
<dbReference type="GO" id="GO:0050930">
    <property type="term" value="P:induction of positive chemotaxis"/>
    <property type="evidence" value="ECO:0007669"/>
    <property type="project" value="TreeGrafter"/>
</dbReference>
<dbReference type="GO" id="GO:0045766">
    <property type="term" value="P:positive regulation of angiogenesis"/>
    <property type="evidence" value="ECO:0007669"/>
    <property type="project" value="TreeGrafter"/>
</dbReference>
<dbReference type="GO" id="GO:0051781">
    <property type="term" value="P:positive regulation of cell division"/>
    <property type="evidence" value="ECO:0007669"/>
    <property type="project" value="UniProtKB-KW"/>
</dbReference>
<dbReference type="GO" id="GO:0001938">
    <property type="term" value="P:positive regulation of endothelial cell proliferation"/>
    <property type="evidence" value="ECO:0000250"/>
    <property type="project" value="UniProtKB"/>
</dbReference>
<dbReference type="GO" id="GO:0051894">
    <property type="term" value="P:positive regulation of focal adhesion assembly"/>
    <property type="evidence" value="ECO:0000250"/>
    <property type="project" value="UniProtKB"/>
</dbReference>
<dbReference type="GO" id="GO:0060754">
    <property type="term" value="P:positive regulation of mast cell chemotaxis"/>
    <property type="evidence" value="ECO:0007669"/>
    <property type="project" value="TreeGrafter"/>
</dbReference>
<dbReference type="GO" id="GO:0050731">
    <property type="term" value="P:positive regulation of peptidyl-tyrosine phosphorylation"/>
    <property type="evidence" value="ECO:0000250"/>
    <property type="project" value="UniProtKB"/>
</dbReference>
<dbReference type="GO" id="GO:0031334">
    <property type="term" value="P:positive regulation of protein-containing complex assembly"/>
    <property type="evidence" value="ECO:0000250"/>
    <property type="project" value="UniProtKB"/>
</dbReference>
<dbReference type="GO" id="GO:0001666">
    <property type="term" value="P:response to hypoxia"/>
    <property type="evidence" value="ECO:0007669"/>
    <property type="project" value="TreeGrafter"/>
</dbReference>
<dbReference type="GO" id="GO:0002040">
    <property type="term" value="P:sprouting angiogenesis"/>
    <property type="evidence" value="ECO:0007669"/>
    <property type="project" value="TreeGrafter"/>
</dbReference>
<dbReference type="GO" id="GO:0048010">
    <property type="term" value="P:vascular endothelial growth factor receptor signaling pathway"/>
    <property type="evidence" value="ECO:0007669"/>
    <property type="project" value="TreeGrafter"/>
</dbReference>
<dbReference type="GO" id="GO:0038084">
    <property type="term" value="P:vascular endothelial growth factor signaling pathway"/>
    <property type="evidence" value="ECO:0007669"/>
    <property type="project" value="TreeGrafter"/>
</dbReference>
<dbReference type="CDD" id="cd00135">
    <property type="entry name" value="PDGF"/>
    <property type="match status" value="1"/>
</dbReference>
<dbReference type="FunFam" id="2.10.160.10:FF:000001">
    <property type="entry name" value="Vascular endothelial growth factor A"/>
    <property type="match status" value="1"/>
</dbReference>
<dbReference type="FunFam" id="2.10.90.10:FF:000009">
    <property type="entry name" value="Vascular endothelial growth factor A"/>
    <property type="match status" value="1"/>
</dbReference>
<dbReference type="Gene3D" id="2.10.90.10">
    <property type="entry name" value="Cystine-knot cytokines"/>
    <property type="match status" value="1"/>
</dbReference>
<dbReference type="Gene3D" id="2.10.160.10">
    <property type="entry name" value="Vascular endothelial growth factor, heparin-binding domain"/>
    <property type="match status" value="1"/>
</dbReference>
<dbReference type="InterPro" id="IPR029034">
    <property type="entry name" value="Cystine-knot_cytokine"/>
</dbReference>
<dbReference type="InterPro" id="IPR023581">
    <property type="entry name" value="PD_growth_factor_CS"/>
</dbReference>
<dbReference type="InterPro" id="IPR000072">
    <property type="entry name" value="PDGF/VEGF_dom"/>
</dbReference>
<dbReference type="InterPro" id="IPR050507">
    <property type="entry name" value="PDGF/VEGF_growth_factor"/>
</dbReference>
<dbReference type="InterPro" id="IPR027928">
    <property type="entry name" value="VEGF_C"/>
</dbReference>
<dbReference type="InterPro" id="IPR036841">
    <property type="entry name" value="VEGF_C_sf"/>
</dbReference>
<dbReference type="PANTHER" id="PTHR12025">
    <property type="entry name" value="VASCULAR ENDOTHELIAL GROWTH FACTOR"/>
    <property type="match status" value="1"/>
</dbReference>
<dbReference type="PANTHER" id="PTHR12025:SF5">
    <property type="entry name" value="VASCULAR ENDOTHELIAL GROWTH FACTOR A, LONG FORM"/>
    <property type="match status" value="1"/>
</dbReference>
<dbReference type="Pfam" id="PF00341">
    <property type="entry name" value="PDGF"/>
    <property type="match status" value="1"/>
</dbReference>
<dbReference type="Pfam" id="PF14554">
    <property type="entry name" value="VEGF_C"/>
    <property type="match status" value="1"/>
</dbReference>
<dbReference type="SMART" id="SM00141">
    <property type="entry name" value="PDGF"/>
    <property type="match status" value="1"/>
</dbReference>
<dbReference type="SUPFAM" id="SSF57501">
    <property type="entry name" value="Cystine-knot cytokines"/>
    <property type="match status" value="1"/>
</dbReference>
<dbReference type="SUPFAM" id="SSF57593">
    <property type="entry name" value="Heparin-binding domain from vascular endothelial growth factor"/>
    <property type="match status" value="1"/>
</dbReference>
<dbReference type="PROSITE" id="PS00249">
    <property type="entry name" value="PDGF_1"/>
    <property type="match status" value="1"/>
</dbReference>
<dbReference type="PROSITE" id="PS50278">
    <property type="entry name" value="PDGF_2"/>
    <property type="match status" value="1"/>
</dbReference>
<name>VEGFA_VIPAA</name>
<feature type="signal peptide" evidence="2">
    <location>
        <begin position="1"/>
        <end position="26"/>
    </location>
</feature>
<feature type="chain" id="PRO_5000452064" description="Vascular endothelial growth factor A">
    <location>
        <begin position="27"/>
        <end position="192"/>
    </location>
</feature>
<feature type="glycosylation site" description="N-linked (GlcNAc...) asparagine" evidence="2">
    <location>
        <position position="101"/>
    </location>
</feature>
<feature type="disulfide bond" evidence="1">
    <location>
        <begin position="52"/>
        <end position="94"/>
    </location>
</feature>
<feature type="disulfide bond" description="Interchain" evidence="1">
    <location>
        <position position="77"/>
    </location>
</feature>
<feature type="disulfide bond" evidence="1">
    <location>
        <begin position="83"/>
        <end position="128"/>
    </location>
</feature>
<feature type="disulfide bond" description="Interchain" evidence="1">
    <location>
        <position position="86"/>
    </location>
</feature>
<feature type="disulfide bond" evidence="1">
    <location>
        <begin position="87"/>
        <end position="130"/>
    </location>
</feature>
<organism>
    <name type="scientific">Vipera ammodytes ammodytes</name>
    <name type="common">Western sand viper</name>
    <dbReference type="NCBI Taxonomy" id="8705"/>
    <lineage>
        <taxon>Eukaryota</taxon>
        <taxon>Metazoa</taxon>
        <taxon>Chordata</taxon>
        <taxon>Craniata</taxon>
        <taxon>Vertebrata</taxon>
        <taxon>Euteleostomi</taxon>
        <taxon>Lepidosauria</taxon>
        <taxon>Squamata</taxon>
        <taxon>Bifurcata</taxon>
        <taxon>Unidentata</taxon>
        <taxon>Episquamata</taxon>
        <taxon>Toxicofera</taxon>
        <taxon>Serpentes</taxon>
        <taxon>Colubroidea</taxon>
        <taxon>Viperidae</taxon>
        <taxon>Viperinae</taxon>
        <taxon>Vipera</taxon>
    </lineage>
</organism>
<keyword id="KW-0037">Angiogenesis</keyword>
<keyword id="KW-0217">Developmental protein</keyword>
<keyword id="KW-0221">Differentiation</keyword>
<keyword id="KW-1015">Disulfide bond</keyword>
<keyword id="KW-0325">Glycoprotein</keyword>
<keyword id="KW-0339">Growth factor</keyword>
<keyword id="KW-0358">Heparin-binding</keyword>
<keyword id="KW-0497">Mitogen</keyword>
<keyword id="KW-0964">Secreted</keyword>
<keyword id="KW-0732">Signal</keyword>
<sequence>MNFLLSWIHWGLAALLYFHNAKVLQAAPAQGDGDRQQGEVISFLTVYERSACRPVETMVDIFQEYPDEVEYIFKPSCVALMRCGGCCNDEALECVPTEVYNVTMEIMKLKPFQSQHIHPMSFQQHSKCECRPKKEVRIRQENHCEPCSERRKHLYKQDPLTCKCSCKFTDSRCKSKQLELNERTCRCEKPRR</sequence>
<evidence type="ECO:0000250" key="1"/>
<evidence type="ECO:0000255" key="2"/>
<evidence type="ECO:0000303" key="3">
    <source>
    </source>
</evidence>
<evidence type="ECO:0000305" key="4"/>
<reference key="1">
    <citation type="journal article" date="2009" name="J. Biol. Chem.">
        <title>Snake venom vascular endothelial growth factors (VEGF-Fs) exclusively vary their structures and functions among species.</title>
        <authorList>
            <person name="Yamazaki Y."/>
            <person name="Matsunaga Y."/>
            <person name="Tokunaga Y."/>
            <person name="Obayashi S."/>
            <person name="Saito M."/>
            <person name="Morita T."/>
        </authorList>
    </citation>
    <scope>NUCLEOTIDE SEQUENCE [MRNA]</scope>
    <source>
        <tissue>Venom gland</tissue>
    </source>
</reference>
<proteinExistence type="evidence at transcript level"/>
<comment type="function">
    <text evidence="1">Growth factor active in angiogenesis, vasculogenesis and endothelial cell growth. Induces endothelial cell proliferation, promotes cell migration, inhibits apoptosis and induces permeabilization of blood vessels.</text>
</comment>
<comment type="subunit">
    <text evidence="1">Homodimer; disulfide-linked. Also found as heterodimer with PGF Interacts with FLT1/VEGFR1 and KDR/VEGFR2 receptors, heparan sulfate and heparin.</text>
</comment>
<comment type="subcellular location">
    <subcellularLocation>
        <location evidence="1">Secreted</location>
    </subcellularLocation>
</comment>
<comment type="tissue specificity">
    <text evidence="4">Expressed by the venom gland, and probably other tissues.</text>
</comment>
<comment type="similarity">
    <text evidence="4">Belongs to the PDGF/VEGF growth factor family.</text>
</comment>
<protein>
    <recommendedName>
        <fullName evidence="3">Vascular endothelial growth factor A</fullName>
        <shortName evidence="3">VEGF-A</shortName>
    </recommendedName>
</protein>
<accession>C0K3N5</accession>